<comment type="function">
    <text evidence="2">Effector that is involved in host plant infection. Contributes to virulence during the early infection stage, by inhibiting plant defense responses induced by both PAMP-triggered immunity (PTI) and effector-triggered immunity (ETI).</text>
</comment>
<comment type="subcellular location">
    <subcellularLocation>
        <location evidence="5">Secreted</location>
    </subcellularLocation>
    <subcellularLocation>
        <location evidence="5">Host cell</location>
    </subcellularLocation>
</comment>
<comment type="induction">
    <text evidence="2">Expression is induced during host plant infection.</text>
</comment>
<comment type="domain">
    <text evidence="5">The RxLR-dEER motif acts to carry the protein into the host cell cytoplasm through binding to cell surface phosphatidylinositol-3-phosphate.</text>
</comment>
<comment type="similarity">
    <text evidence="4">Belongs to the RxLR effector family.</text>
</comment>
<protein>
    <recommendedName>
        <fullName evidence="3">RxLR effector protein CRE2</fullName>
    </recommendedName>
    <alternativeName>
        <fullName evidence="3">Core RXLR effector 2</fullName>
    </alternativeName>
</protein>
<organism>
    <name type="scientific">Phytophthora infestans (strain T30-4)</name>
    <name type="common">Potato late blight agent</name>
    <dbReference type="NCBI Taxonomy" id="403677"/>
    <lineage>
        <taxon>Eukaryota</taxon>
        <taxon>Sar</taxon>
        <taxon>Stramenopiles</taxon>
        <taxon>Oomycota</taxon>
        <taxon>Peronosporales</taxon>
        <taxon>Peronosporaceae</taxon>
        <taxon>Phytophthora</taxon>
    </lineage>
</organism>
<name>CRE2_PHYIT</name>
<sequence length="140" mass="16088">MRWLIWTAVSTLVMLLAMTEVSASIRTPEISTKGSTSATAFRARSLSSEYNSLEKRSLRDKSSSLITESEERSIAESLANKVVNRLFKTLYKKEMTPLTFRAKMMGRDNFLVGDYKVWWDKARATGTIPKWKFQRSKSYT</sequence>
<proteinExistence type="evidence at transcript level"/>
<accession>D0N0R8</accession>
<dbReference type="EMBL" id="DS028122">
    <property type="protein sequence ID" value="EEY67231.1"/>
    <property type="molecule type" value="Genomic_DNA"/>
</dbReference>
<dbReference type="RefSeq" id="XP_002905879.1">
    <property type="nucleotide sequence ID" value="XM_002905833.1"/>
</dbReference>
<dbReference type="STRING" id="403677.D0N0R8"/>
<dbReference type="EnsemblProtists" id="PITG_04196T0">
    <property type="protein sequence ID" value="PITG_04196T0"/>
    <property type="gene ID" value="PITG_04196"/>
</dbReference>
<dbReference type="GeneID" id="9479751"/>
<dbReference type="KEGG" id="pif:PITG_04196"/>
<dbReference type="VEuPathDB" id="FungiDB:PITG_04196"/>
<dbReference type="eggNOG" id="ENOG502RH2W">
    <property type="taxonomic scope" value="Eukaryota"/>
</dbReference>
<dbReference type="HOGENOM" id="CLU_135914_1_0_1"/>
<dbReference type="InParanoid" id="D0N0R8"/>
<dbReference type="OMA" id="VEKFFRW"/>
<dbReference type="OrthoDB" id="126213at2759"/>
<dbReference type="Proteomes" id="UP000006643">
    <property type="component" value="Partially assembled WGS sequence"/>
</dbReference>
<dbReference type="GO" id="GO:0005576">
    <property type="term" value="C:extracellular region"/>
    <property type="evidence" value="ECO:0007669"/>
    <property type="project" value="UniProtKB-SubCell"/>
</dbReference>
<dbReference type="GO" id="GO:0043657">
    <property type="term" value="C:host cell"/>
    <property type="evidence" value="ECO:0007669"/>
    <property type="project" value="UniProtKB-SubCell"/>
</dbReference>
<feature type="signal peptide" evidence="1">
    <location>
        <begin position="1"/>
        <end position="24"/>
    </location>
</feature>
<feature type="chain" id="PRO_5003012755" description="RxLR effector protein CRE2">
    <location>
        <begin position="25"/>
        <end position="140"/>
    </location>
</feature>
<feature type="short sequence motif" description="RxLR-dEER" evidence="5">
    <location>
        <begin position="56"/>
        <end position="72"/>
    </location>
</feature>
<evidence type="ECO:0000255" key="1"/>
<evidence type="ECO:0000269" key="2">
    <source>
    </source>
</evidence>
<evidence type="ECO:0000303" key="3">
    <source>
    </source>
</evidence>
<evidence type="ECO:0000305" key="4"/>
<evidence type="ECO:0000305" key="5">
    <source>
    </source>
</evidence>
<gene>
    <name evidence="3" type="primary">CRE2</name>
    <name type="ORF">PITG_04196</name>
</gene>
<keyword id="KW-1185">Reference proteome</keyword>
<keyword id="KW-0964">Secreted</keyword>
<keyword id="KW-0732">Signal</keyword>
<keyword id="KW-0843">Virulence</keyword>
<reference key="1">
    <citation type="journal article" date="2009" name="Nature">
        <title>Genome sequence and analysis of the Irish potato famine pathogen Phytophthora infestans.</title>
        <authorList>
            <consortium name="The Broad Institute Genome Sequencing Platform"/>
            <person name="Haas B.J."/>
            <person name="Kamoun S."/>
            <person name="Zody M.C."/>
            <person name="Jiang R.H."/>
            <person name="Handsaker R.E."/>
            <person name="Cano L.M."/>
            <person name="Grabherr M."/>
            <person name="Kodira C.D."/>
            <person name="Raffaele S."/>
            <person name="Torto-Alalibo T."/>
            <person name="Bozkurt T.O."/>
            <person name="Ah-Fong A.M."/>
            <person name="Alvarado L."/>
            <person name="Anderson V.L."/>
            <person name="Armstrong M.R."/>
            <person name="Avrova A."/>
            <person name="Baxter L."/>
            <person name="Beynon J."/>
            <person name="Boevink P.C."/>
            <person name="Bollmann S.R."/>
            <person name="Bos J.I."/>
            <person name="Bulone V."/>
            <person name="Cai G."/>
            <person name="Cakir C."/>
            <person name="Carrington J.C."/>
            <person name="Chawner M."/>
            <person name="Conti L."/>
            <person name="Costanzo S."/>
            <person name="Ewan R."/>
            <person name="Fahlgren N."/>
            <person name="Fischbach M.A."/>
            <person name="Fugelstad J."/>
            <person name="Gilroy E.M."/>
            <person name="Gnerre S."/>
            <person name="Green P.J."/>
            <person name="Grenville-Briggs L.J."/>
            <person name="Griffith J."/>
            <person name="Grunwald N.J."/>
            <person name="Horn K."/>
            <person name="Horner N.R."/>
            <person name="Hu C.H."/>
            <person name="Huitema E."/>
            <person name="Jeong D.H."/>
            <person name="Jones A.M."/>
            <person name="Jones J.D."/>
            <person name="Jones R.W."/>
            <person name="Karlsson E.K."/>
            <person name="Kunjeti S.G."/>
            <person name="Lamour K."/>
            <person name="Liu Z."/>
            <person name="Ma L."/>
            <person name="Maclean D."/>
            <person name="Chibucos M.C."/>
            <person name="McDonald H."/>
            <person name="McWalters J."/>
            <person name="Meijer H.J."/>
            <person name="Morgan W."/>
            <person name="Morris P.F."/>
            <person name="Munro C.A."/>
            <person name="O'Neill K."/>
            <person name="Ospina-Giraldo M."/>
            <person name="Pinzon A."/>
            <person name="Pritchard L."/>
            <person name="Ramsahoye B."/>
            <person name="Ren Q."/>
            <person name="Restrepo S."/>
            <person name="Roy S."/>
            <person name="Sadanandom A."/>
            <person name="Savidor A."/>
            <person name="Schornack S."/>
            <person name="Schwartz D.C."/>
            <person name="Schumann U.D."/>
            <person name="Schwessinger B."/>
            <person name="Seyer L."/>
            <person name="Sharpe T."/>
            <person name="Silvar C."/>
            <person name="Song J."/>
            <person name="Studholme D.J."/>
            <person name="Sykes S."/>
            <person name="Thines M."/>
            <person name="van de Vondervoort P.J."/>
            <person name="Phuntumart V."/>
            <person name="Wawra S."/>
            <person name="Weide R."/>
            <person name="Win J."/>
            <person name="Young C."/>
            <person name="Zhou S."/>
            <person name="Fry W."/>
            <person name="Meyers B.C."/>
            <person name="van West P."/>
            <person name="Ristaino J."/>
            <person name="Govers F."/>
            <person name="Birch P.R."/>
            <person name="Whisson S.C."/>
            <person name="Judelson H.S."/>
            <person name="Nusbaum C."/>
        </authorList>
    </citation>
    <scope>NUCLEOTIDE SEQUENCE [LARGE SCALE GENOMIC DNA]</scope>
    <source>
        <strain>T30-4</strain>
    </source>
</reference>
<reference key="2">
    <citation type="journal article" date="2017" name="Front. Plant Sci.">
        <title>Conserved RXLR effector genes of Phytophthora infestans expressed at the early stage of potato infection are suppressive to host defense.</title>
        <authorList>
            <person name="Yin J."/>
            <person name="Gu B."/>
            <person name="Huang G."/>
            <person name="Tian Y."/>
            <person name="Quan J."/>
            <person name="Lindqvist-Kreuze H."/>
            <person name="Shan W."/>
        </authorList>
    </citation>
    <scope>INDUCTION</scope>
    <scope>DOMAIN</scope>
    <scope>FUNCTION</scope>
</reference>